<gene>
    <name type="primary">Oasl2</name>
</gene>
<proteinExistence type="evidence at protein level"/>
<sequence>MDPFPDLYATPGDSLDHFLEHSLQPQRDWKEEGQDAWERIERFFREQCFRDELLLDQEVRVIKVVKGGSSGKGTTLNHRSDQDMILFLSCFSSFEEQARNREVVISFIKKRLIHCSRSLAYNIIVLTHREGKRAPRSLTLKVQSRKTDDIIWMDILPAYDALGPISRDSKPAPAIYETLIRSKGYPGDFSPSFTELQRHFVKTRPVKLKNLLRLVKFWYLQCLRRKYGRGAVLPSKYALELLTIYAWEMGTESSDSFNLDEGFVAVMELLVNYRDICIYWTKYYNFQNEVVRNFLKKQLKGDRPIILDPADPTNNLGRRKGWEQVAAEAAFCLLQVCCTTVGPSERWNVQRARDVQVRVKQTGTVDWTLWTNPYSPIRKMKAEIRREKNFGGELRISFQEPGGERQLLSSRKTLADYGIFSKVNIQVLETFPPEILVFVKYPGGQSKPFTIDPDDTILDLKEKIEDAGGPCAEDQVLLLDDEELEDDESLKELEIKDCDTIILIRVID</sequence>
<feature type="chain" id="PRO_0000160267" description="2'-5'-oligoadenylate synthase-like protein 2">
    <location>
        <begin position="1"/>
        <end position="508"/>
    </location>
</feature>
<feature type="domain" description="Ubiquitin-like" evidence="4">
    <location>
        <begin position="435"/>
        <end position="473"/>
    </location>
</feature>
<feature type="binding site" evidence="1">
    <location>
        <position position="69"/>
    </location>
    <ligand>
        <name>ATP</name>
        <dbReference type="ChEBI" id="CHEBI:30616"/>
    </ligand>
</feature>
<feature type="binding site" evidence="3">
    <location>
        <position position="81"/>
    </location>
    <ligand>
        <name>Mg(2+)</name>
        <dbReference type="ChEBI" id="CHEBI:18420"/>
        <note>catalytic</note>
    </ligand>
</feature>
<feature type="binding site" evidence="3">
    <location>
        <position position="83"/>
    </location>
    <ligand>
        <name>Mg(2+)</name>
        <dbReference type="ChEBI" id="CHEBI:18420"/>
        <note>catalytic</note>
    </ligand>
</feature>
<feature type="binding site" evidence="3">
    <location>
        <position position="154"/>
    </location>
    <ligand>
        <name>Mg(2+)</name>
        <dbReference type="ChEBI" id="CHEBI:18420"/>
        <note>catalytic</note>
    </ligand>
</feature>
<feature type="binding site" evidence="2">
    <location>
        <position position="213"/>
    </location>
    <ligand>
        <name>ATP</name>
        <dbReference type="ChEBI" id="CHEBI:30616"/>
    </ligand>
</feature>
<feature type="binding site" evidence="1">
    <location>
        <position position="216"/>
    </location>
    <ligand>
        <name>ATP</name>
        <dbReference type="ChEBI" id="CHEBI:30616"/>
    </ligand>
</feature>
<feature type="sequence conflict" description="In Ref. 1; AAD02818." evidence="7" ref="1">
    <original>GPCAE</original>
    <variation>AGGLT</variation>
    <location>
        <begin position="469"/>
        <end position="473"/>
    </location>
</feature>
<feature type="sequence conflict" description="In Ref. 1; AAD02818." evidence="7" ref="1">
    <location>
        <begin position="474"/>
        <end position="508"/>
    </location>
</feature>
<comment type="function">
    <text evidence="5 6">Interferon-induced, dsRNA-activated antiviral enzyme which plays a critical role in cellular innate antiviral response. Synthesizes oligomers of 2'-5'-oligoadenylates (2-5A) from ATP which then bind to the inactive monomeric form of ribonuclease L (RNase L) leading to its dimerization and subsequent activation. Activation of RNase L leads to degradation of cellular as well as viral RNA, resulting in the inhibition of protein synthesis, thus terminating viral replication. Can mediate the antiviral effect via the classical RNase L-dependent pathway or an alternative antiviral pathway independent of RNase L.</text>
</comment>
<comment type="catalytic activity">
    <reaction evidence="6">
        <text>3 ATP = 5'-triphosphoadenylyl-(2'-&gt;5')-adenylyl-(2'-&gt;5')-adenosine + 2 diphosphate</text>
        <dbReference type="Rhea" id="RHEA:34407"/>
        <dbReference type="ChEBI" id="CHEBI:30616"/>
        <dbReference type="ChEBI" id="CHEBI:33019"/>
        <dbReference type="ChEBI" id="CHEBI:67143"/>
        <dbReference type="EC" id="2.7.7.84"/>
    </reaction>
    <physiologicalReaction direction="left-to-right" evidence="6">
        <dbReference type="Rhea" id="RHEA:34408"/>
    </physiologicalReaction>
</comment>
<comment type="cofactor">
    <cofactor evidence="7">
        <name>Mg(2+)</name>
        <dbReference type="ChEBI" id="CHEBI:18420"/>
    </cofactor>
</comment>
<comment type="activity regulation">
    <text evidence="6">Produced as a latent enzyme which is activated by dsRNA generated during the course of viral infection. The dsRNA activator must be at least 15 nucleotides long, and no modification of the 2'-hydroxyl group is tolerated. ssRNA or dsDNA do not act as activators.</text>
</comment>
<comment type="biophysicochemical properties">
    <kinetics>
        <KM evidence="6">0.66 mM for ATP</KM>
        <text evidence="6">kcat is 0.39 sec(-1) with ATP as substrate.</text>
    </kinetics>
</comment>
<comment type="tissue specificity">
    <text evidence="5">Strongly expressed in spleen dendritic cells, whereas, in bone marrow-derived dendritic cells, the amount increases during the maturation process. Expressed in many organs, the highest levels being in thymus, lung, and bone marrow.</text>
</comment>
<comment type="similarity">
    <text evidence="7">Belongs to the 2-5A synthase family.</text>
</comment>
<protein>
    <recommendedName>
        <fullName>2'-5'-oligoadenylate synthase-like protein 2</fullName>
        <ecNumber evidence="6">2.7.7.84</ecNumber>
    </recommendedName>
    <alternativeName>
        <fullName>54 kDa 2'-5'-oligoadenylate synthase-like protein</fullName>
        <shortName>p54 OASL</shortName>
    </alternativeName>
    <alternativeName>
        <fullName>M1204</fullName>
    </alternativeName>
</protein>
<reference key="1">
    <citation type="journal article" date="1999" name="J. Immunol.">
        <title>M1204, a novel 2',5' oligoadenylate synthetase with a ubiquitin-like extension, is induced during maturation of murine dendritic cells.</title>
        <authorList>
            <person name="Tiefenthaler M."/>
            <person name="Marksteiner R."/>
            <person name="Neyer S."/>
            <person name="Koch F."/>
            <person name="Hofer S."/>
            <person name="Schuler G."/>
            <person name="Nussenzweig M."/>
            <person name="Schneider R."/>
            <person name="Heufler C."/>
        </authorList>
    </citation>
    <scope>NUCLEOTIDE SEQUENCE [MRNA]</scope>
    <source>
        <tissue>Spleen</tissue>
    </source>
</reference>
<reference key="2">
    <citation type="journal article" date="2002" name="J. Interferon Cytokine Res.">
        <title>Genomic structure of the mouse 2',5'-oligoadenylate synthetase gene family.</title>
        <authorList>
            <person name="Kakuta S."/>
            <person name="Shibata S."/>
            <person name="Iwakura Y."/>
        </authorList>
    </citation>
    <scope>NUCLEOTIDE SEQUENCE [MRNA]</scope>
    <scope>FUNCTION</scope>
    <scope>TISSUE SPECIFICITY</scope>
    <source>
        <strain>C57BL/6J</strain>
        <tissue>Colon</tissue>
    </source>
</reference>
<reference key="3">
    <citation type="journal article" date="2005" name="Science">
        <title>The transcriptional landscape of the mammalian genome.</title>
        <authorList>
            <person name="Carninci P."/>
            <person name="Kasukawa T."/>
            <person name="Katayama S."/>
            <person name="Gough J."/>
            <person name="Frith M.C."/>
            <person name="Maeda N."/>
            <person name="Oyama R."/>
            <person name="Ravasi T."/>
            <person name="Lenhard B."/>
            <person name="Wells C."/>
            <person name="Kodzius R."/>
            <person name="Shimokawa K."/>
            <person name="Bajic V.B."/>
            <person name="Brenner S.E."/>
            <person name="Batalov S."/>
            <person name="Forrest A.R."/>
            <person name="Zavolan M."/>
            <person name="Davis M.J."/>
            <person name="Wilming L.G."/>
            <person name="Aidinis V."/>
            <person name="Allen J.E."/>
            <person name="Ambesi-Impiombato A."/>
            <person name="Apweiler R."/>
            <person name="Aturaliya R.N."/>
            <person name="Bailey T.L."/>
            <person name="Bansal M."/>
            <person name="Baxter L."/>
            <person name="Beisel K.W."/>
            <person name="Bersano T."/>
            <person name="Bono H."/>
            <person name="Chalk A.M."/>
            <person name="Chiu K.P."/>
            <person name="Choudhary V."/>
            <person name="Christoffels A."/>
            <person name="Clutterbuck D.R."/>
            <person name="Crowe M.L."/>
            <person name="Dalla E."/>
            <person name="Dalrymple B.P."/>
            <person name="de Bono B."/>
            <person name="Della Gatta G."/>
            <person name="di Bernardo D."/>
            <person name="Down T."/>
            <person name="Engstrom P."/>
            <person name="Fagiolini M."/>
            <person name="Faulkner G."/>
            <person name="Fletcher C.F."/>
            <person name="Fukushima T."/>
            <person name="Furuno M."/>
            <person name="Futaki S."/>
            <person name="Gariboldi M."/>
            <person name="Georgii-Hemming P."/>
            <person name="Gingeras T.R."/>
            <person name="Gojobori T."/>
            <person name="Green R.E."/>
            <person name="Gustincich S."/>
            <person name="Harbers M."/>
            <person name="Hayashi Y."/>
            <person name="Hensch T.K."/>
            <person name="Hirokawa N."/>
            <person name="Hill D."/>
            <person name="Huminiecki L."/>
            <person name="Iacono M."/>
            <person name="Ikeo K."/>
            <person name="Iwama A."/>
            <person name="Ishikawa T."/>
            <person name="Jakt M."/>
            <person name="Kanapin A."/>
            <person name="Katoh M."/>
            <person name="Kawasawa Y."/>
            <person name="Kelso J."/>
            <person name="Kitamura H."/>
            <person name="Kitano H."/>
            <person name="Kollias G."/>
            <person name="Krishnan S.P."/>
            <person name="Kruger A."/>
            <person name="Kummerfeld S.K."/>
            <person name="Kurochkin I.V."/>
            <person name="Lareau L.F."/>
            <person name="Lazarevic D."/>
            <person name="Lipovich L."/>
            <person name="Liu J."/>
            <person name="Liuni S."/>
            <person name="McWilliam S."/>
            <person name="Madan Babu M."/>
            <person name="Madera M."/>
            <person name="Marchionni L."/>
            <person name="Matsuda H."/>
            <person name="Matsuzawa S."/>
            <person name="Miki H."/>
            <person name="Mignone F."/>
            <person name="Miyake S."/>
            <person name="Morris K."/>
            <person name="Mottagui-Tabar S."/>
            <person name="Mulder N."/>
            <person name="Nakano N."/>
            <person name="Nakauchi H."/>
            <person name="Ng P."/>
            <person name="Nilsson R."/>
            <person name="Nishiguchi S."/>
            <person name="Nishikawa S."/>
            <person name="Nori F."/>
            <person name="Ohara O."/>
            <person name="Okazaki Y."/>
            <person name="Orlando V."/>
            <person name="Pang K.C."/>
            <person name="Pavan W.J."/>
            <person name="Pavesi G."/>
            <person name="Pesole G."/>
            <person name="Petrovsky N."/>
            <person name="Piazza S."/>
            <person name="Reed J."/>
            <person name="Reid J.F."/>
            <person name="Ring B.Z."/>
            <person name="Ringwald M."/>
            <person name="Rost B."/>
            <person name="Ruan Y."/>
            <person name="Salzberg S.L."/>
            <person name="Sandelin A."/>
            <person name="Schneider C."/>
            <person name="Schoenbach C."/>
            <person name="Sekiguchi K."/>
            <person name="Semple C.A."/>
            <person name="Seno S."/>
            <person name="Sessa L."/>
            <person name="Sheng Y."/>
            <person name="Shibata Y."/>
            <person name="Shimada H."/>
            <person name="Shimada K."/>
            <person name="Silva D."/>
            <person name="Sinclair B."/>
            <person name="Sperling S."/>
            <person name="Stupka E."/>
            <person name="Sugiura K."/>
            <person name="Sultana R."/>
            <person name="Takenaka Y."/>
            <person name="Taki K."/>
            <person name="Tammoja K."/>
            <person name="Tan S.L."/>
            <person name="Tang S."/>
            <person name="Taylor M.S."/>
            <person name="Tegner J."/>
            <person name="Teichmann S.A."/>
            <person name="Ueda H.R."/>
            <person name="van Nimwegen E."/>
            <person name="Verardo R."/>
            <person name="Wei C.L."/>
            <person name="Yagi K."/>
            <person name="Yamanishi H."/>
            <person name="Zabarovsky E."/>
            <person name="Zhu S."/>
            <person name="Zimmer A."/>
            <person name="Hide W."/>
            <person name="Bult C."/>
            <person name="Grimmond S.M."/>
            <person name="Teasdale R.D."/>
            <person name="Liu E.T."/>
            <person name="Brusic V."/>
            <person name="Quackenbush J."/>
            <person name="Wahlestedt C."/>
            <person name="Mattick J.S."/>
            <person name="Hume D.A."/>
            <person name="Kai C."/>
            <person name="Sasaki D."/>
            <person name="Tomaru Y."/>
            <person name="Fukuda S."/>
            <person name="Kanamori-Katayama M."/>
            <person name="Suzuki M."/>
            <person name="Aoki J."/>
            <person name="Arakawa T."/>
            <person name="Iida J."/>
            <person name="Imamura K."/>
            <person name="Itoh M."/>
            <person name="Kato T."/>
            <person name="Kawaji H."/>
            <person name="Kawagashira N."/>
            <person name="Kawashima T."/>
            <person name="Kojima M."/>
            <person name="Kondo S."/>
            <person name="Konno H."/>
            <person name="Nakano K."/>
            <person name="Ninomiya N."/>
            <person name="Nishio T."/>
            <person name="Okada M."/>
            <person name="Plessy C."/>
            <person name="Shibata K."/>
            <person name="Shiraki T."/>
            <person name="Suzuki S."/>
            <person name="Tagami M."/>
            <person name="Waki K."/>
            <person name="Watahiki A."/>
            <person name="Okamura-Oho Y."/>
            <person name="Suzuki H."/>
            <person name="Kawai J."/>
            <person name="Hayashizaki Y."/>
        </authorList>
    </citation>
    <scope>NUCLEOTIDE SEQUENCE [LARGE SCALE MRNA]</scope>
    <source>
        <strain>C57BL/6J</strain>
        <tissue>Bone marrow</tissue>
        <tissue>Tongue</tissue>
    </source>
</reference>
<reference key="4">
    <citation type="journal article" date="2009" name="PLoS Biol.">
        <title>Lineage-specific biology revealed by a finished genome assembly of the mouse.</title>
        <authorList>
            <person name="Church D.M."/>
            <person name="Goodstadt L."/>
            <person name="Hillier L.W."/>
            <person name="Zody M.C."/>
            <person name="Goldstein S."/>
            <person name="She X."/>
            <person name="Bult C.J."/>
            <person name="Agarwala R."/>
            <person name="Cherry J.L."/>
            <person name="DiCuccio M."/>
            <person name="Hlavina W."/>
            <person name="Kapustin Y."/>
            <person name="Meric P."/>
            <person name="Maglott D."/>
            <person name="Birtle Z."/>
            <person name="Marques A.C."/>
            <person name="Graves T."/>
            <person name="Zhou S."/>
            <person name="Teague B."/>
            <person name="Potamousis K."/>
            <person name="Churas C."/>
            <person name="Place M."/>
            <person name="Herschleb J."/>
            <person name="Runnheim R."/>
            <person name="Forrest D."/>
            <person name="Amos-Landgraf J."/>
            <person name="Schwartz D.C."/>
            <person name="Cheng Z."/>
            <person name="Lindblad-Toh K."/>
            <person name="Eichler E.E."/>
            <person name="Ponting C.P."/>
        </authorList>
    </citation>
    <scope>NUCLEOTIDE SEQUENCE [LARGE SCALE GENOMIC DNA]</scope>
    <source>
        <strain>C57BL/6J</strain>
    </source>
</reference>
<reference key="5">
    <citation type="journal article" date="2003" name="Nucleic Acids Res.">
        <title>Characterization of the 2'-5'-oligoadenylate synthetase ubiquitin-like family.</title>
        <authorList>
            <person name="Eskildsen S."/>
            <person name="Justesen J."/>
            <person name="Schierup M.H."/>
            <person name="Hartmann R."/>
        </authorList>
    </citation>
    <scope>FUNCTION</scope>
    <scope>CATALYTIC ACTIVITY</scope>
    <scope>BIOPHYSICOCHEMICAL PROPERTIES</scope>
    <scope>ACTIVITY REGULATION</scope>
</reference>
<reference key="6">
    <citation type="journal article" date="2006" name="J. Mol. Evol.">
        <title>The mammalian 2'-5' oligoadenylate synthetase gene family: evidence for concerted evolution of paralogous Oas1 genes in Rodentia and Artiodactyla.</title>
        <authorList>
            <person name="Perelygin A.A."/>
            <person name="Zharkikh A.A."/>
            <person name="Scherbik S.V."/>
            <person name="Brinton M.A."/>
        </authorList>
    </citation>
    <scope>REVIEW</scope>
</reference>
<name>OASL2_MOUSE</name>
<evidence type="ECO:0000250" key="1">
    <source>
        <dbReference type="UniProtKB" id="P00973"/>
    </source>
</evidence>
<evidence type="ECO:0000250" key="2">
    <source>
        <dbReference type="UniProtKB" id="P29728"/>
    </source>
</evidence>
<evidence type="ECO:0000255" key="3"/>
<evidence type="ECO:0000255" key="4">
    <source>
        <dbReference type="PROSITE-ProRule" id="PRU00214"/>
    </source>
</evidence>
<evidence type="ECO:0000269" key="5">
    <source>
    </source>
</evidence>
<evidence type="ECO:0000269" key="6">
    <source>
    </source>
</evidence>
<evidence type="ECO:0000305" key="7"/>
<organism>
    <name type="scientific">Mus musculus</name>
    <name type="common">Mouse</name>
    <dbReference type="NCBI Taxonomy" id="10090"/>
    <lineage>
        <taxon>Eukaryota</taxon>
        <taxon>Metazoa</taxon>
        <taxon>Chordata</taxon>
        <taxon>Craniata</taxon>
        <taxon>Vertebrata</taxon>
        <taxon>Euteleostomi</taxon>
        <taxon>Mammalia</taxon>
        <taxon>Eutheria</taxon>
        <taxon>Euarchontoglires</taxon>
        <taxon>Glires</taxon>
        <taxon>Rodentia</taxon>
        <taxon>Myomorpha</taxon>
        <taxon>Muroidea</taxon>
        <taxon>Muridae</taxon>
        <taxon>Murinae</taxon>
        <taxon>Mus</taxon>
        <taxon>Mus</taxon>
    </lineage>
</organism>
<keyword id="KW-0051">Antiviral defense</keyword>
<keyword id="KW-0067">ATP-binding</keyword>
<keyword id="KW-0391">Immunity</keyword>
<keyword id="KW-0399">Innate immunity</keyword>
<keyword id="KW-0460">Magnesium</keyword>
<keyword id="KW-0479">Metal-binding</keyword>
<keyword id="KW-0547">Nucleotide-binding</keyword>
<keyword id="KW-0548">Nucleotidyltransferase</keyword>
<keyword id="KW-1185">Reference proteome</keyword>
<keyword id="KW-0694">RNA-binding</keyword>
<keyword id="KW-0808">Transferase</keyword>
<dbReference type="EC" id="2.7.7.84" evidence="6"/>
<dbReference type="EMBL" id="AF068835">
    <property type="protein sequence ID" value="AAD02818.1"/>
    <property type="molecule type" value="mRNA"/>
</dbReference>
<dbReference type="EMBL" id="AK010034">
    <property type="protein sequence ID" value="BAB26655.1"/>
    <property type="molecule type" value="mRNA"/>
</dbReference>
<dbReference type="EMBL" id="AK150492">
    <property type="protein sequence ID" value="BAE29608.1"/>
    <property type="molecule type" value="mRNA"/>
</dbReference>
<dbReference type="EMBL" id="AC116500">
    <property type="status" value="NOT_ANNOTATED_CDS"/>
    <property type="molecule type" value="Genomic_DNA"/>
</dbReference>
<dbReference type="CCDS" id="CCDS39226.1"/>
<dbReference type="RefSeq" id="NP_035984.2">
    <property type="nucleotide sequence ID" value="NM_011854.2"/>
</dbReference>
<dbReference type="RefSeq" id="XP_006530377.1">
    <property type="nucleotide sequence ID" value="XM_006530314.5"/>
</dbReference>
<dbReference type="RefSeq" id="XP_006530378.1">
    <property type="nucleotide sequence ID" value="XM_006530315.5"/>
</dbReference>
<dbReference type="SMR" id="Q9Z2F2"/>
<dbReference type="FunCoup" id="Q9Z2F2">
    <property type="interactions" value="169"/>
</dbReference>
<dbReference type="MINT" id="Q9Z2F2"/>
<dbReference type="STRING" id="10090.ENSMUSP00000031542"/>
<dbReference type="GlyGen" id="Q9Z2F2">
    <property type="glycosylation" value="1 site"/>
</dbReference>
<dbReference type="iPTMnet" id="Q9Z2F2"/>
<dbReference type="PhosphoSitePlus" id="Q9Z2F2"/>
<dbReference type="PaxDb" id="10090-ENSMUSP00000031542"/>
<dbReference type="ProteomicsDB" id="291934"/>
<dbReference type="DNASU" id="23962"/>
<dbReference type="Ensembl" id="ENSMUST00000031542.13">
    <property type="protein sequence ID" value="ENSMUSP00000031542.10"/>
    <property type="gene ID" value="ENSMUSG00000029561.18"/>
</dbReference>
<dbReference type="GeneID" id="23962"/>
<dbReference type="KEGG" id="mmu:23962"/>
<dbReference type="UCSC" id="uc008zcu.1">
    <property type="organism name" value="mouse"/>
</dbReference>
<dbReference type="AGR" id="MGI:1344390"/>
<dbReference type="CTD" id="23962"/>
<dbReference type="MGI" id="MGI:1344390">
    <property type="gene designation" value="Oasl2"/>
</dbReference>
<dbReference type="VEuPathDB" id="HostDB:ENSMUSG00000029561"/>
<dbReference type="eggNOG" id="KOG0001">
    <property type="taxonomic scope" value="Eukaryota"/>
</dbReference>
<dbReference type="GeneTree" id="ENSGT00510000046406"/>
<dbReference type="HOGENOM" id="CLU_040930_1_0_1"/>
<dbReference type="InParanoid" id="Q9Z2F2"/>
<dbReference type="OMA" id="RDYEDIC"/>
<dbReference type="OrthoDB" id="1885901at2759"/>
<dbReference type="PhylomeDB" id="Q9Z2F2"/>
<dbReference type="TreeFam" id="TF329749"/>
<dbReference type="SABIO-RK" id="Q9Z2F2"/>
<dbReference type="BioGRID-ORCS" id="23962">
    <property type="hits" value="4 hits in 77 CRISPR screens"/>
</dbReference>
<dbReference type="ChiTaRS" id="Oasl2">
    <property type="organism name" value="mouse"/>
</dbReference>
<dbReference type="PRO" id="PR:Q9Z2F2"/>
<dbReference type="Proteomes" id="UP000000589">
    <property type="component" value="Chromosome 5"/>
</dbReference>
<dbReference type="RNAct" id="Q9Z2F2">
    <property type="molecule type" value="protein"/>
</dbReference>
<dbReference type="Bgee" id="ENSMUSG00000029561">
    <property type="expression patterns" value="Expressed in small intestine Peyer's patch and 145 other cell types or tissues"/>
</dbReference>
<dbReference type="ExpressionAtlas" id="Q9Z2F2">
    <property type="expression patterns" value="baseline and differential"/>
</dbReference>
<dbReference type="GO" id="GO:0001730">
    <property type="term" value="F:2'-5'-oligoadenylate synthetase activity"/>
    <property type="evidence" value="ECO:0000314"/>
    <property type="project" value="UniProtKB"/>
</dbReference>
<dbReference type="GO" id="GO:0005524">
    <property type="term" value="F:ATP binding"/>
    <property type="evidence" value="ECO:0007669"/>
    <property type="project" value="UniProtKB-KW"/>
</dbReference>
<dbReference type="GO" id="GO:0003725">
    <property type="term" value="F:double-stranded RNA binding"/>
    <property type="evidence" value="ECO:0000314"/>
    <property type="project" value="UniProtKB"/>
</dbReference>
<dbReference type="GO" id="GO:0046872">
    <property type="term" value="F:metal ion binding"/>
    <property type="evidence" value="ECO:0007669"/>
    <property type="project" value="UniProtKB-KW"/>
</dbReference>
<dbReference type="GO" id="GO:0051607">
    <property type="term" value="P:defense response to virus"/>
    <property type="evidence" value="ECO:0007669"/>
    <property type="project" value="UniProtKB-KW"/>
</dbReference>
<dbReference type="GO" id="GO:0045087">
    <property type="term" value="P:innate immune response"/>
    <property type="evidence" value="ECO:0007669"/>
    <property type="project" value="UniProtKB-KW"/>
</dbReference>
<dbReference type="GO" id="GO:0070106">
    <property type="term" value="P:interleukin-27-mediated signaling pathway"/>
    <property type="evidence" value="ECO:0000270"/>
    <property type="project" value="ARUK-UCL"/>
</dbReference>
<dbReference type="GO" id="GO:0006164">
    <property type="term" value="P:purine nucleotide biosynthetic process"/>
    <property type="evidence" value="ECO:0000314"/>
    <property type="project" value="UniProtKB"/>
</dbReference>
<dbReference type="GO" id="GO:0009615">
    <property type="term" value="P:response to virus"/>
    <property type="evidence" value="ECO:0000304"/>
    <property type="project" value="UniProtKB"/>
</dbReference>
<dbReference type="CDD" id="cd05400">
    <property type="entry name" value="NT_2-5OAS_ClassI-CCAase"/>
    <property type="match status" value="1"/>
</dbReference>
<dbReference type="CDD" id="cd01811">
    <property type="entry name" value="Ubl1_OASL"/>
    <property type="match status" value="1"/>
</dbReference>
<dbReference type="FunFam" id="3.10.20.90:FF:000205">
    <property type="entry name" value="2'-5'-oligoadenylate synthase-like protein 2"/>
    <property type="match status" value="1"/>
</dbReference>
<dbReference type="FunFam" id="1.10.1410.20:FF:000001">
    <property type="entry name" value="2'-5'-oligoadenylate synthetase 1"/>
    <property type="match status" value="1"/>
</dbReference>
<dbReference type="FunFam" id="3.30.460.10:FF:000007">
    <property type="entry name" value="2'-5'-oligoadenylate synthetase 1"/>
    <property type="match status" value="1"/>
</dbReference>
<dbReference type="Gene3D" id="1.10.1410.20">
    <property type="entry name" value="2'-5'-oligoadenylate synthetase 1, domain 2"/>
    <property type="match status" value="1"/>
</dbReference>
<dbReference type="Gene3D" id="3.30.460.10">
    <property type="entry name" value="Beta Polymerase, domain 2"/>
    <property type="match status" value="1"/>
</dbReference>
<dbReference type="Gene3D" id="3.10.20.90">
    <property type="entry name" value="Phosphatidylinositol 3-kinase Catalytic Subunit, Chain A, domain 1"/>
    <property type="match status" value="1"/>
</dbReference>
<dbReference type="InterPro" id="IPR018952">
    <property type="entry name" value="2-5-oligoAdlate_synth_1_dom2/C"/>
</dbReference>
<dbReference type="InterPro" id="IPR006117">
    <property type="entry name" value="2-5OAS_C_CS"/>
</dbReference>
<dbReference type="InterPro" id="IPR043518">
    <property type="entry name" value="2-5OAS_N_CS"/>
</dbReference>
<dbReference type="InterPro" id="IPR006116">
    <property type="entry name" value="NT_2-5OAS_ClassI-CCAase"/>
</dbReference>
<dbReference type="InterPro" id="IPR043519">
    <property type="entry name" value="NT_sf"/>
</dbReference>
<dbReference type="InterPro" id="IPR000626">
    <property type="entry name" value="Ubiquitin-like_dom"/>
</dbReference>
<dbReference type="InterPro" id="IPR029071">
    <property type="entry name" value="Ubiquitin-like_domsf"/>
</dbReference>
<dbReference type="PANTHER" id="PTHR11258:SF7">
    <property type="entry name" value="2'-5'-OLIGOADENYLATE SYNTHASE-LIKE PROTEIN 2"/>
    <property type="match status" value="1"/>
</dbReference>
<dbReference type="PANTHER" id="PTHR11258">
    <property type="entry name" value="2-5 OLIGOADENYLATE SYNTHETASE"/>
    <property type="match status" value="1"/>
</dbReference>
<dbReference type="Pfam" id="PF10421">
    <property type="entry name" value="OAS1_C"/>
    <property type="match status" value="1"/>
</dbReference>
<dbReference type="Pfam" id="PF00240">
    <property type="entry name" value="ubiquitin"/>
    <property type="match status" value="1"/>
</dbReference>
<dbReference type="SMART" id="SM00213">
    <property type="entry name" value="UBQ"/>
    <property type="match status" value="1"/>
</dbReference>
<dbReference type="SUPFAM" id="SSF81301">
    <property type="entry name" value="Nucleotidyltransferase"/>
    <property type="match status" value="1"/>
</dbReference>
<dbReference type="SUPFAM" id="SSF81631">
    <property type="entry name" value="PAP/OAS1 substrate-binding domain"/>
    <property type="match status" value="1"/>
</dbReference>
<dbReference type="SUPFAM" id="SSF54236">
    <property type="entry name" value="Ubiquitin-like"/>
    <property type="match status" value="2"/>
</dbReference>
<dbReference type="PROSITE" id="PS00832">
    <property type="entry name" value="25A_SYNTH_1"/>
    <property type="match status" value="1"/>
</dbReference>
<dbReference type="PROSITE" id="PS00833">
    <property type="entry name" value="25A_SYNTH_2"/>
    <property type="match status" value="1"/>
</dbReference>
<dbReference type="PROSITE" id="PS50152">
    <property type="entry name" value="25A_SYNTH_3"/>
    <property type="match status" value="1"/>
</dbReference>
<dbReference type="PROSITE" id="PS50053">
    <property type="entry name" value="UBIQUITIN_2"/>
    <property type="match status" value="1"/>
</dbReference>
<accession>Q9Z2F2</accession>
<accession>Q9D6S2</accession>